<sequence>MNLHEYQAKALFAEYGLPVSEGYACDTPQEAVEAAGRIGGNMWVVKCQVHAGGRGKAGGVKVTGDKEEIRAFAEKWLGKNLVTYQTDENGQPVAKILVESCTDIANELYLGAVVDRATRRVVFMASTEGGVEIEKVAEETPELIHKAIIDPIAGPQPFQARDLGFKLGLNPTQMKQFTKIFMGLAQMFLDHDFALLEINPLVITTEGNLHCLDGKIGVDGNALFRQPKIKDMHDPSQDDAREAHAAKFELNYVALDGNVGCMVNGAGLAMGTMDIVNLHGGKPANFLDVGGGATKERVSEAFKIILSDSNVKAVLVNIFGGIVRCDMIAEGIIGAVKEVGVKVPVVVRLEGTNAELGAKVLAESGLDIIAAKSLTDAAQQVVKAAEGK</sequence>
<proteinExistence type="inferred from homology"/>
<gene>
    <name evidence="1" type="primary">sucC</name>
    <name type="ordered locus">Sama_1429</name>
</gene>
<reference key="1">
    <citation type="submission" date="2006-12" db="EMBL/GenBank/DDBJ databases">
        <title>Complete sequence of Shewanella amazonensis SB2B.</title>
        <authorList>
            <consortium name="US DOE Joint Genome Institute"/>
            <person name="Copeland A."/>
            <person name="Lucas S."/>
            <person name="Lapidus A."/>
            <person name="Barry K."/>
            <person name="Detter J.C."/>
            <person name="Glavina del Rio T."/>
            <person name="Hammon N."/>
            <person name="Israni S."/>
            <person name="Dalin E."/>
            <person name="Tice H."/>
            <person name="Pitluck S."/>
            <person name="Munk A.C."/>
            <person name="Brettin T."/>
            <person name="Bruce D."/>
            <person name="Han C."/>
            <person name="Tapia R."/>
            <person name="Gilna P."/>
            <person name="Schmutz J."/>
            <person name="Larimer F."/>
            <person name="Land M."/>
            <person name="Hauser L."/>
            <person name="Kyrpides N."/>
            <person name="Mikhailova N."/>
            <person name="Fredrickson J."/>
            <person name="Richardson P."/>
        </authorList>
    </citation>
    <scope>NUCLEOTIDE SEQUENCE [LARGE SCALE GENOMIC DNA]</scope>
    <source>
        <strain>ATCC BAA-1098 / SB2B</strain>
    </source>
</reference>
<feature type="chain" id="PRO_1000082217" description="Succinate--CoA ligase [ADP-forming] subunit beta">
    <location>
        <begin position="1"/>
        <end position="388"/>
    </location>
</feature>
<feature type="domain" description="ATP-grasp" evidence="1">
    <location>
        <begin position="9"/>
        <end position="244"/>
    </location>
</feature>
<feature type="binding site" evidence="1">
    <location>
        <position position="46"/>
    </location>
    <ligand>
        <name>ATP</name>
        <dbReference type="ChEBI" id="CHEBI:30616"/>
    </ligand>
</feature>
<feature type="binding site" evidence="1">
    <location>
        <begin position="53"/>
        <end position="55"/>
    </location>
    <ligand>
        <name>ATP</name>
        <dbReference type="ChEBI" id="CHEBI:30616"/>
    </ligand>
</feature>
<feature type="binding site" evidence="1">
    <location>
        <position position="99"/>
    </location>
    <ligand>
        <name>ATP</name>
        <dbReference type="ChEBI" id="CHEBI:30616"/>
    </ligand>
</feature>
<feature type="binding site" evidence="1">
    <location>
        <position position="102"/>
    </location>
    <ligand>
        <name>ATP</name>
        <dbReference type="ChEBI" id="CHEBI:30616"/>
    </ligand>
</feature>
<feature type="binding site" evidence="1">
    <location>
        <position position="107"/>
    </location>
    <ligand>
        <name>ATP</name>
        <dbReference type="ChEBI" id="CHEBI:30616"/>
    </ligand>
</feature>
<feature type="binding site" evidence="1">
    <location>
        <position position="199"/>
    </location>
    <ligand>
        <name>Mg(2+)</name>
        <dbReference type="ChEBI" id="CHEBI:18420"/>
    </ligand>
</feature>
<feature type="binding site" evidence="1">
    <location>
        <position position="213"/>
    </location>
    <ligand>
        <name>Mg(2+)</name>
        <dbReference type="ChEBI" id="CHEBI:18420"/>
    </ligand>
</feature>
<feature type="binding site" evidence="1">
    <location>
        <position position="264"/>
    </location>
    <ligand>
        <name>substrate</name>
        <note>ligand shared with subunit alpha</note>
    </ligand>
</feature>
<feature type="binding site" evidence="1">
    <location>
        <begin position="321"/>
        <end position="323"/>
    </location>
    <ligand>
        <name>substrate</name>
        <note>ligand shared with subunit alpha</note>
    </ligand>
</feature>
<organism>
    <name type="scientific">Shewanella amazonensis (strain ATCC BAA-1098 / SB2B)</name>
    <dbReference type="NCBI Taxonomy" id="326297"/>
    <lineage>
        <taxon>Bacteria</taxon>
        <taxon>Pseudomonadati</taxon>
        <taxon>Pseudomonadota</taxon>
        <taxon>Gammaproteobacteria</taxon>
        <taxon>Alteromonadales</taxon>
        <taxon>Shewanellaceae</taxon>
        <taxon>Shewanella</taxon>
    </lineage>
</organism>
<protein>
    <recommendedName>
        <fullName evidence="1">Succinate--CoA ligase [ADP-forming] subunit beta</fullName>
        <ecNumber evidence="1">6.2.1.5</ecNumber>
    </recommendedName>
    <alternativeName>
        <fullName evidence="1">Succinyl-CoA synthetase subunit beta</fullName>
        <shortName evidence="1">SCS-beta</shortName>
    </alternativeName>
</protein>
<name>SUCC_SHEAM</name>
<comment type="function">
    <text evidence="1">Succinyl-CoA synthetase functions in the citric acid cycle (TCA), coupling the hydrolysis of succinyl-CoA to the synthesis of either ATP or GTP and thus represents the only step of substrate-level phosphorylation in the TCA. The beta subunit provides nucleotide specificity of the enzyme and binds the substrate succinate, while the binding sites for coenzyme A and phosphate are found in the alpha subunit.</text>
</comment>
<comment type="catalytic activity">
    <reaction evidence="1">
        <text>succinate + ATP + CoA = succinyl-CoA + ADP + phosphate</text>
        <dbReference type="Rhea" id="RHEA:17661"/>
        <dbReference type="ChEBI" id="CHEBI:30031"/>
        <dbReference type="ChEBI" id="CHEBI:30616"/>
        <dbReference type="ChEBI" id="CHEBI:43474"/>
        <dbReference type="ChEBI" id="CHEBI:57287"/>
        <dbReference type="ChEBI" id="CHEBI:57292"/>
        <dbReference type="ChEBI" id="CHEBI:456216"/>
        <dbReference type="EC" id="6.2.1.5"/>
    </reaction>
    <physiologicalReaction direction="right-to-left" evidence="1">
        <dbReference type="Rhea" id="RHEA:17663"/>
    </physiologicalReaction>
</comment>
<comment type="catalytic activity">
    <reaction evidence="1">
        <text>GTP + succinate + CoA = succinyl-CoA + GDP + phosphate</text>
        <dbReference type="Rhea" id="RHEA:22120"/>
        <dbReference type="ChEBI" id="CHEBI:30031"/>
        <dbReference type="ChEBI" id="CHEBI:37565"/>
        <dbReference type="ChEBI" id="CHEBI:43474"/>
        <dbReference type="ChEBI" id="CHEBI:57287"/>
        <dbReference type="ChEBI" id="CHEBI:57292"/>
        <dbReference type="ChEBI" id="CHEBI:58189"/>
    </reaction>
    <physiologicalReaction direction="right-to-left" evidence="1">
        <dbReference type="Rhea" id="RHEA:22122"/>
    </physiologicalReaction>
</comment>
<comment type="cofactor">
    <cofactor evidence="1">
        <name>Mg(2+)</name>
        <dbReference type="ChEBI" id="CHEBI:18420"/>
    </cofactor>
    <text evidence="1">Binds 1 Mg(2+) ion per subunit.</text>
</comment>
<comment type="pathway">
    <text evidence="1">Carbohydrate metabolism; tricarboxylic acid cycle; succinate from succinyl-CoA (ligase route): step 1/1.</text>
</comment>
<comment type="subunit">
    <text evidence="1">Heterotetramer of two alpha and two beta subunits.</text>
</comment>
<comment type="similarity">
    <text evidence="1">Belongs to the succinate/malate CoA ligase beta subunit family.</text>
</comment>
<accession>A1S5I0</accession>
<dbReference type="EC" id="6.2.1.5" evidence="1"/>
<dbReference type="EMBL" id="CP000507">
    <property type="protein sequence ID" value="ABL99636.1"/>
    <property type="molecule type" value="Genomic_DNA"/>
</dbReference>
<dbReference type="RefSeq" id="WP_011759544.1">
    <property type="nucleotide sequence ID" value="NC_008700.1"/>
</dbReference>
<dbReference type="SMR" id="A1S5I0"/>
<dbReference type="STRING" id="326297.Sama_1429"/>
<dbReference type="KEGG" id="saz:Sama_1429"/>
<dbReference type="eggNOG" id="COG0045">
    <property type="taxonomic scope" value="Bacteria"/>
</dbReference>
<dbReference type="HOGENOM" id="CLU_037430_0_2_6"/>
<dbReference type="OrthoDB" id="9802602at2"/>
<dbReference type="UniPathway" id="UPA00223">
    <property type="reaction ID" value="UER00999"/>
</dbReference>
<dbReference type="Proteomes" id="UP000009175">
    <property type="component" value="Chromosome"/>
</dbReference>
<dbReference type="GO" id="GO:0005829">
    <property type="term" value="C:cytosol"/>
    <property type="evidence" value="ECO:0007669"/>
    <property type="project" value="TreeGrafter"/>
</dbReference>
<dbReference type="GO" id="GO:0042709">
    <property type="term" value="C:succinate-CoA ligase complex"/>
    <property type="evidence" value="ECO:0007669"/>
    <property type="project" value="TreeGrafter"/>
</dbReference>
<dbReference type="GO" id="GO:0005524">
    <property type="term" value="F:ATP binding"/>
    <property type="evidence" value="ECO:0007669"/>
    <property type="project" value="UniProtKB-UniRule"/>
</dbReference>
<dbReference type="GO" id="GO:0000287">
    <property type="term" value="F:magnesium ion binding"/>
    <property type="evidence" value="ECO:0007669"/>
    <property type="project" value="UniProtKB-UniRule"/>
</dbReference>
<dbReference type="GO" id="GO:0004775">
    <property type="term" value="F:succinate-CoA ligase (ADP-forming) activity"/>
    <property type="evidence" value="ECO:0007669"/>
    <property type="project" value="UniProtKB-UniRule"/>
</dbReference>
<dbReference type="GO" id="GO:0004776">
    <property type="term" value="F:succinate-CoA ligase (GDP-forming) activity"/>
    <property type="evidence" value="ECO:0007669"/>
    <property type="project" value="RHEA"/>
</dbReference>
<dbReference type="GO" id="GO:0006104">
    <property type="term" value="P:succinyl-CoA metabolic process"/>
    <property type="evidence" value="ECO:0007669"/>
    <property type="project" value="TreeGrafter"/>
</dbReference>
<dbReference type="GO" id="GO:0006099">
    <property type="term" value="P:tricarboxylic acid cycle"/>
    <property type="evidence" value="ECO:0007669"/>
    <property type="project" value="UniProtKB-UniRule"/>
</dbReference>
<dbReference type="FunFam" id="3.30.1490.20:FF:000002">
    <property type="entry name" value="Succinate--CoA ligase [ADP-forming] subunit beta"/>
    <property type="match status" value="1"/>
</dbReference>
<dbReference type="FunFam" id="3.30.470.20:FF:000002">
    <property type="entry name" value="Succinate--CoA ligase [ADP-forming] subunit beta"/>
    <property type="match status" value="1"/>
</dbReference>
<dbReference type="FunFam" id="3.40.50.261:FF:000001">
    <property type="entry name" value="Succinate--CoA ligase [ADP-forming] subunit beta"/>
    <property type="match status" value="1"/>
</dbReference>
<dbReference type="Gene3D" id="3.30.1490.20">
    <property type="entry name" value="ATP-grasp fold, A domain"/>
    <property type="match status" value="1"/>
</dbReference>
<dbReference type="Gene3D" id="3.30.470.20">
    <property type="entry name" value="ATP-grasp fold, B domain"/>
    <property type="match status" value="1"/>
</dbReference>
<dbReference type="Gene3D" id="3.40.50.261">
    <property type="entry name" value="Succinyl-CoA synthetase domains"/>
    <property type="match status" value="1"/>
</dbReference>
<dbReference type="HAMAP" id="MF_00558">
    <property type="entry name" value="Succ_CoA_beta"/>
    <property type="match status" value="1"/>
</dbReference>
<dbReference type="InterPro" id="IPR011761">
    <property type="entry name" value="ATP-grasp"/>
</dbReference>
<dbReference type="InterPro" id="IPR013650">
    <property type="entry name" value="ATP-grasp_succ-CoA_synth-type"/>
</dbReference>
<dbReference type="InterPro" id="IPR013815">
    <property type="entry name" value="ATP_grasp_subdomain_1"/>
</dbReference>
<dbReference type="InterPro" id="IPR017866">
    <property type="entry name" value="Succ-CoA_synthase_bsu_CS"/>
</dbReference>
<dbReference type="InterPro" id="IPR005811">
    <property type="entry name" value="SUCC_ACL_C"/>
</dbReference>
<dbReference type="InterPro" id="IPR005809">
    <property type="entry name" value="Succ_CoA_ligase-like_bsu"/>
</dbReference>
<dbReference type="InterPro" id="IPR016102">
    <property type="entry name" value="Succinyl-CoA_synth-like"/>
</dbReference>
<dbReference type="NCBIfam" id="NF001913">
    <property type="entry name" value="PRK00696.1"/>
    <property type="match status" value="1"/>
</dbReference>
<dbReference type="NCBIfam" id="TIGR01016">
    <property type="entry name" value="sucCoAbeta"/>
    <property type="match status" value="1"/>
</dbReference>
<dbReference type="PANTHER" id="PTHR11815:SF10">
    <property type="entry name" value="SUCCINATE--COA LIGASE [GDP-FORMING] SUBUNIT BETA, MITOCHONDRIAL"/>
    <property type="match status" value="1"/>
</dbReference>
<dbReference type="PANTHER" id="PTHR11815">
    <property type="entry name" value="SUCCINYL-COA SYNTHETASE BETA CHAIN"/>
    <property type="match status" value="1"/>
</dbReference>
<dbReference type="Pfam" id="PF08442">
    <property type="entry name" value="ATP-grasp_2"/>
    <property type="match status" value="1"/>
</dbReference>
<dbReference type="Pfam" id="PF00549">
    <property type="entry name" value="Ligase_CoA"/>
    <property type="match status" value="1"/>
</dbReference>
<dbReference type="PIRSF" id="PIRSF001554">
    <property type="entry name" value="SucCS_beta"/>
    <property type="match status" value="1"/>
</dbReference>
<dbReference type="SUPFAM" id="SSF56059">
    <property type="entry name" value="Glutathione synthetase ATP-binding domain-like"/>
    <property type="match status" value="1"/>
</dbReference>
<dbReference type="SUPFAM" id="SSF52210">
    <property type="entry name" value="Succinyl-CoA synthetase domains"/>
    <property type="match status" value="1"/>
</dbReference>
<dbReference type="PROSITE" id="PS50975">
    <property type="entry name" value="ATP_GRASP"/>
    <property type="match status" value="1"/>
</dbReference>
<dbReference type="PROSITE" id="PS01217">
    <property type="entry name" value="SUCCINYL_COA_LIG_3"/>
    <property type="match status" value="1"/>
</dbReference>
<evidence type="ECO:0000255" key="1">
    <source>
        <dbReference type="HAMAP-Rule" id="MF_00558"/>
    </source>
</evidence>
<keyword id="KW-0067">ATP-binding</keyword>
<keyword id="KW-0436">Ligase</keyword>
<keyword id="KW-0460">Magnesium</keyword>
<keyword id="KW-0479">Metal-binding</keyword>
<keyword id="KW-0547">Nucleotide-binding</keyword>
<keyword id="KW-1185">Reference proteome</keyword>
<keyword id="KW-0816">Tricarboxylic acid cycle</keyword>